<name>RL14_XANP2</name>
<comment type="function">
    <text evidence="1">Binds to 23S rRNA. Forms part of two intersubunit bridges in the 70S ribosome.</text>
</comment>
<comment type="subunit">
    <text evidence="1">Part of the 50S ribosomal subunit. Forms a cluster with proteins L3 and L19. In the 70S ribosome, L14 and L19 interact and together make contacts with the 16S rRNA in bridges B5 and B8.</text>
</comment>
<comment type="similarity">
    <text evidence="1">Belongs to the universal ribosomal protein uL14 family.</text>
</comment>
<dbReference type="EMBL" id="CP000781">
    <property type="protein sequence ID" value="ABS66934.1"/>
    <property type="molecule type" value="Genomic_DNA"/>
</dbReference>
<dbReference type="SMR" id="A7IFZ1"/>
<dbReference type="STRING" id="78245.Xaut_1689"/>
<dbReference type="KEGG" id="xau:Xaut_1689"/>
<dbReference type="eggNOG" id="COG0093">
    <property type="taxonomic scope" value="Bacteria"/>
</dbReference>
<dbReference type="HOGENOM" id="CLU_095071_2_0_5"/>
<dbReference type="PhylomeDB" id="A7IFZ1"/>
<dbReference type="Proteomes" id="UP000002417">
    <property type="component" value="Chromosome"/>
</dbReference>
<dbReference type="GO" id="GO:0022625">
    <property type="term" value="C:cytosolic large ribosomal subunit"/>
    <property type="evidence" value="ECO:0007669"/>
    <property type="project" value="TreeGrafter"/>
</dbReference>
<dbReference type="GO" id="GO:0070180">
    <property type="term" value="F:large ribosomal subunit rRNA binding"/>
    <property type="evidence" value="ECO:0007669"/>
    <property type="project" value="TreeGrafter"/>
</dbReference>
<dbReference type="GO" id="GO:0003735">
    <property type="term" value="F:structural constituent of ribosome"/>
    <property type="evidence" value="ECO:0007669"/>
    <property type="project" value="InterPro"/>
</dbReference>
<dbReference type="GO" id="GO:0006412">
    <property type="term" value="P:translation"/>
    <property type="evidence" value="ECO:0007669"/>
    <property type="project" value="UniProtKB-UniRule"/>
</dbReference>
<dbReference type="CDD" id="cd00337">
    <property type="entry name" value="Ribosomal_uL14"/>
    <property type="match status" value="1"/>
</dbReference>
<dbReference type="Gene3D" id="2.40.150.20">
    <property type="entry name" value="Ribosomal protein L14"/>
    <property type="match status" value="1"/>
</dbReference>
<dbReference type="HAMAP" id="MF_01367">
    <property type="entry name" value="Ribosomal_uL14"/>
    <property type="match status" value="1"/>
</dbReference>
<dbReference type="InterPro" id="IPR000218">
    <property type="entry name" value="Ribosomal_uL14"/>
</dbReference>
<dbReference type="InterPro" id="IPR005745">
    <property type="entry name" value="Ribosomal_uL14_bac-type"/>
</dbReference>
<dbReference type="InterPro" id="IPR019972">
    <property type="entry name" value="Ribosomal_uL14_CS"/>
</dbReference>
<dbReference type="InterPro" id="IPR036853">
    <property type="entry name" value="Ribosomal_uL14_sf"/>
</dbReference>
<dbReference type="NCBIfam" id="TIGR01067">
    <property type="entry name" value="rplN_bact"/>
    <property type="match status" value="1"/>
</dbReference>
<dbReference type="PANTHER" id="PTHR11761">
    <property type="entry name" value="50S/60S RIBOSOMAL PROTEIN L14/L23"/>
    <property type="match status" value="1"/>
</dbReference>
<dbReference type="PANTHER" id="PTHR11761:SF3">
    <property type="entry name" value="LARGE RIBOSOMAL SUBUNIT PROTEIN UL14M"/>
    <property type="match status" value="1"/>
</dbReference>
<dbReference type="Pfam" id="PF00238">
    <property type="entry name" value="Ribosomal_L14"/>
    <property type="match status" value="1"/>
</dbReference>
<dbReference type="SMART" id="SM01374">
    <property type="entry name" value="Ribosomal_L14"/>
    <property type="match status" value="1"/>
</dbReference>
<dbReference type="SUPFAM" id="SSF50193">
    <property type="entry name" value="Ribosomal protein L14"/>
    <property type="match status" value="1"/>
</dbReference>
<dbReference type="PROSITE" id="PS00049">
    <property type="entry name" value="RIBOSOMAL_L14"/>
    <property type="match status" value="1"/>
</dbReference>
<accession>A7IFZ1</accession>
<reference key="1">
    <citation type="submission" date="2007-07" db="EMBL/GenBank/DDBJ databases">
        <title>Complete sequence of chromosome of Xanthobacter autotrophicus Py2.</title>
        <authorList>
            <consortium name="US DOE Joint Genome Institute"/>
            <person name="Copeland A."/>
            <person name="Lucas S."/>
            <person name="Lapidus A."/>
            <person name="Barry K."/>
            <person name="Glavina del Rio T."/>
            <person name="Hammon N."/>
            <person name="Israni S."/>
            <person name="Dalin E."/>
            <person name="Tice H."/>
            <person name="Pitluck S."/>
            <person name="Sims D."/>
            <person name="Brettin T."/>
            <person name="Bruce D."/>
            <person name="Detter J.C."/>
            <person name="Han C."/>
            <person name="Tapia R."/>
            <person name="Brainard J."/>
            <person name="Schmutz J."/>
            <person name="Larimer F."/>
            <person name="Land M."/>
            <person name="Hauser L."/>
            <person name="Kyrpides N."/>
            <person name="Kim E."/>
            <person name="Ensigns S.A."/>
            <person name="Richardson P."/>
        </authorList>
    </citation>
    <scope>NUCLEOTIDE SEQUENCE [LARGE SCALE GENOMIC DNA]</scope>
    <source>
        <strain>ATCC BAA-1158 / Py2</strain>
    </source>
</reference>
<keyword id="KW-1185">Reference proteome</keyword>
<keyword id="KW-0687">Ribonucleoprotein</keyword>
<keyword id="KW-0689">Ribosomal protein</keyword>
<keyword id="KW-0694">RNA-binding</keyword>
<keyword id="KW-0699">rRNA-binding</keyword>
<gene>
    <name evidence="1" type="primary">rplN</name>
    <name type="ordered locus">Xaut_1689</name>
</gene>
<organism>
    <name type="scientific">Xanthobacter autotrophicus (strain ATCC BAA-1158 / Py2)</name>
    <dbReference type="NCBI Taxonomy" id="78245"/>
    <lineage>
        <taxon>Bacteria</taxon>
        <taxon>Pseudomonadati</taxon>
        <taxon>Pseudomonadota</taxon>
        <taxon>Alphaproteobacteria</taxon>
        <taxon>Hyphomicrobiales</taxon>
        <taxon>Xanthobacteraceae</taxon>
        <taxon>Xanthobacter</taxon>
    </lineage>
</organism>
<evidence type="ECO:0000255" key="1">
    <source>
        <dbReference type="HAMAP-Rule" id="MF_01367"/>
    </source>
</evidence>
<evidence type="ECO:0000256" key="2">
    <source>
        <dbReference type="SAM" id="MobiDB-lite"/>
    </source>
</evidence>
<evidence type="ECO:0000305" key="3"/>
<sequence>MIQMQTNLDVADNSGARRVMCIKVLGGSKRKYAHVGDIIVVSVKEAIPRGRVKKGDVMKAVVVRTAKDIRRVDGSVIRFDRNAAVLINNKRAQSWDQTIALSIARRNEGYTHSQHSNQREGGERIQAQPSPPHARRAVKTSFCR</sequence>
<feature type="chain" id="PRO_0000355843" description="Large ribosomal subunit protein uL14">
    <location>
        <begin position="1"/>
        <end position="144"/>
    </location>
</feature>
<feature type="region of interest" description="Disordered" evidence="2">
    <location>
        <begin position="107"/>
        <end position="144"/>
    </location>
</feature>
<proteinExistence type="inferred from homology"/>
<protein>
    <recommendedName>
        <fullName evidence="1">Large ribosomal subunit protein uL14</fullName>
    </recommendedName>
    <alternativeName>
        <fullName evidence="3">50S ribosomal protein L14</fullName>
    </alternativeName>
</protein>